<organism>
    <name type="scientific">Olea europaea</name>
    <name type="common">Common olive</name>
    <dbReference type="NCBI Taxonomy" id="4146"/>
    <lineage>
        <taxon>Eukaryota</taxon>
        <taxon>Viridiplantae</taxon>
        <taxon>Streptophyta</taxon>
        <taxon>Embryophyta</taxon>
        <taxon>Tracheophyta</taxon>
        <taxon>Spermatophyta</taxon>
        <taxon>Magnoliopsida</taxon>
        <taxon>eudicotyledons</taxon>
        <taxon>Gunneridae</taxon>
        <taxon>Pentapetalae</taxon>
        <taxon>asterids</taxon>
        <taxon>lamiids</taxon>
        <taxon>Lamiales</taxon>
        <taxon>Oleaceae</taxon>
        <taxon>Oleeae</taxon>
        <taxon>Olea</taxon>
    </lineage>
</organism>
<name>PROBG_OLEEU</name>
<sequence length="134" mass="14409">MLWQAYVDDHLMCDIEGHEGHRLTAAAIVGHDGSVWAQSATFPQFKPEEMNGIMTDFNEPGHLAPTGLHLGGTKYMVIQGEAGAVIRGKKGSGGITIKETGQALVCGIYKEPVTPGQCNMVVERLGDYLLEQGL</sequence>
<protein>
    <recommendedName>
        <fullName>Profilin-2</fullName>
    </recommendedName>
    <alternativeName>
        <fullName>Pollen allergen Ole e 2</fullName>
    </alternativeName>
    <allergenName>Ole e 2</allergenName>
</protein>
<proteinExistence type="evidence at protein level"/>
<feature type="initiator methionine" description="Removed" evidence="1">
    <location>
        <position position="1"/>
    </location>
</feature>
<feature type="chain" id="PRO_0000425024" description="Profilin-2">
    <location>
        <begin position="2"/>
        <end position="134"/>
    </location>
</feature>
<feature type="short sequence motif" description="Involved in PIP2 interaction">
    <location>
        <begin position="84"/>
        <end position="100"/>
    </location>
</feature>
<feature type="modified residue" description="Phosphothreonine" evidence="1">
    <location>
        <position position="114"/>
    </location>
</feature>
<feature type="disulfide bond" evidence="3">
    <location>
        <begin position="13"/>
        <end position="118"/>
    </location>
</feature>
<reference key="1">
    <citation type="journal article" date="2012" name="PLoS ONE">
        <title>Characterization of profilin polymorphism in pollen with a focus on multifunctionality.</title>
        <authorList>
            <person name="Jimenez-Lopez J.C."/>
            <person name="Morales S."/>
            <person name="Castro A.J."/>
            <person name="Volkmann D."/>
            <person name="Rodriguez-Garcia M.I."/>
            <person name="Alche Jde D."/>
        </authorList>
    </citation>
    <scope>NUCLEOTIDE SEQUENCE [MRNA]</scope>
    <scope>POLYMORPHISM</scope>
    <source>
        <strain>cv. Villalonga</strain>
    </source>
</reference>
<reference key="2">
    <citation type="journal article" date="2013" name="PLoS ONE">
        <title>Analysis of the effects of polymorphism on pollen profilin structural functionality and the generation of conformational, T- and B-cell epitopes.</title>
        <authorList>
            <person name="Jimenez-Lopez J.C."/>
            <person name="Rodriguez-Garcia M.I."/>
            <person name="Alche J.D."/>
        </authorList>
    </citation>
    <scope>3D-STRUCTURE MODELING</scope>
    <scope>DISULFIDE BOND</scope>
</reference>
<keyword id="KW-0009">Actin-binding</keyword>
<keyword id="KW-0020">Allergen</keyword>
<keyword id="KW-0963">Cytoplasm</keyword>
<keyword id="KW-0206">Cytoskeleton</keyword>
<keyword id="KW-1015">Disulfide bond</keyword>
<keyword id="KW-0597">Phosphoprotein</keyword>
<comment type="function">
    <text evidence="1">Binds to actin and affects the structure of the cytoskeleton. At high concentrations, profilin prevents the polymerization of actin, whereas it enhances it at low concentrations (By similarity).</text>
</comment>
<comment type="subunit">
    <text evidence="1">Occurs in many kinds of cells as a complex with monomeric actin in a 1:1 ratio.</text>
</comment>
<comment type="subcellular location">
    <subcellularLocation>
        <location evidence="1">Cytoplasm</location>
        <location evidence="1">Cytoskeleton</location>
    </subcellularLocation>
</comment>
<comment type="PTM">
    <text evidence="1">Phosphorylated by MAP kinases.</text>
</comment>
<comment type="polymorphism">
    <text>Several isoforms of the allergen exist due to polymorphism.</text>
</comment>
<comment type="allergen">
    <text>Causes an allergic reaction in human.</text>
</comment>
<comment type="miscellaneous">
    <text evidence="3">The variability of the residues taking part of IgE-binding epitopes might be responsible of the difference in cross-reactivity among olive pollen cultivars, and between distantly related pollen species, leading to a variable range of allergy reactions among atopic patients.</text>
</comment>
<comment type="similarity">
    <text evidence="2">Belongs to the profilin family.</text>
</comment>
<accession>A4GDT4</accession>
<dbReference type="EMBL" id="DQ138352">
    <property type="protein sequence ID" value="AAZ30430.1"/>
    <property type="molecule type" value="mRNA"/>
</dbReference>
<dbReference type="EMBL" id="DQ138354">
    <property type="protein sequence ID" value="AAZ30432.1"/>
    <property type="molecule type" value="mRNA"/>
</dbReference>
<dbReference type="SMR" id="A4GDT4"/>
<dbReference type="Allergome" id="490">
    <property type="allergen name" value="Ole e 2"/>
</dbReference>
<dbReference type="GO" id="GO:0005938">
    <property type="term" value="C:cell cortex"/>
    <property type="evidence" value="ECO:0007669"/>
    <property type="project" value="TreeGrafter"/>
</dbReference>
<dbReference type="GO" id="GO:0005856">
    <property type="term" value="C:cytoskeleton"/>
    <property type="evidence" value="ECO:0007669"/>
    <property type="project" value="UniProtKB-SubCell"/>
</dbReference>
<dbReference type="GO" id="GO:0003785">
    <property type="term" value="F:actin monomer binding"/>
    <property type="evidence" value="ECO:0007669"/>
    <property type="project" value="TreeGrafter"/>
</dbReference>
<dbReference type="CDD" id="cd00148">
    <property type="entry name" value="PROF"/>
    <property type="match status" value="1"/>
</dbReference>
<dbReference type="FunFam" id="3.30.450.30:FF:000001">
    <property type="entry name" value="Profilin"/>
    <property type="match status" value="1"/>
</dbReference>
<dbReference type="Gene3D" id="3.30.450.30">
    <property type="entry name" value="Dynein light chain 2a, cytoplasmic"/>
    <property type="match status" value="1"/>
</dbReference>
<dbReference type="InterPro" id="IPR048278">
    <property type="entry name" value="PFN"/>
</dbReference>
<dbReference type="InterPro" id="IPR005455">
    <property type="entry name" value="PFN_euk"/>
</dbReference>
<dbReference type="InterPro" id="IPR036140">
    <property type="entry name" value="PFN_sf"/>
</dbReference>
<dbReference type="PANTHER" id="PTHR11604">
    <property type="entry name" value="PROFILIN"/>
    <property type="match status" value="1"/>
</dbReference>
<dbReference type="PANTHER" id="PTHR11604:SF25">
    <property type="entry name" value="PROFILIN-5"/>
    <property type="match status" value="1"/>
</dbReference>
<dbReference type="Pfam" id="PF00235">
    <property type="entry name" value="Profilin"/>
    <property type="match status" value="1"/>
</dbReference>
<dbReference type="PRINTS" id="PR00392">
    <property type="entry name" value="PROFILIN"/>
</dbReference>
<dbReference type="PRINTS" id="PR01640">
    <property type="entry name" value="PROFILINPLNT"/>
</dbReference>
<dbReference type="SMART" id="SM00392">
    <property type="entry name" value="PROF"/>
    <property type="match status" value="1"/>
</dbReference>
<dbReference type="SUPFAM" id="SSF55770">
    <property type="entry name" value="Profilin (actin-binding protein)"/>
    <property type="match status" value="1"/>
</dbReference>
<evidence type="ECO:0000250" key="1"/>
<evidence type="ECO:0000305" key="2"/>
<evidence type="ECO:0000305" key="3">
    <source>
    </source>
</evidence>